<protein>
    <recommendedName>
        <fullName evidence="1">Cysteine--tRNA ligase</fullName>
        <ecNumber evidence="1">6.1.1.16</ecNumber>
    </recommendedName>
    <alternativeName>
        <fullName evidence="1">Cysteinyl-tRNA synthetase</fullName>
        <shortName evidence="1">CysRS</shortName>
    </alternativeName>
</protein>
<dbReference type="EC" id="6.1.1.16" evidence="1"/>
<dbReference type="EMBL" id="CR936503">
    <property type="protein sequence ID" value="CAI55988.1"/>
    <property type="molecule type" value="Genomic_DNA"/>
</dbReference>
<dbReference type="RefSeq" id="WP_011375371.1">
    <property type="nucleotide sequence ID" value="NC_007576.1"/>
</dbReference>
<dbReference type="SMR" id="Q38UZ6"/>
<dbReference type="STRING" id="314315.LCA_1681"/>
<dbReference type="KEGG" id="lsa:LCA_1681"/>
<dbReference type="eggNOG" id="COG0215">
    <property type="taxonomic scope" value="Bacteria"/>
</dbReference>
<dbReference type="HOGENOM" id="CLU_013528_0_1_9"/>
<dbReference type="OrthoDB" id="9815130at2"/>
<dbReference type="Proteomes" id="UP000002707">
    <property type="component" value="Chromosome"/>
</dbReference>
<dbReference type="GO" id="GO:0005829">
    <property type="term" value="C:cytosol"/>
    <property type="evidence" value="ECO:0007669"/>
    <property type="project" value="TreeGrafter"/>
</dbReference>
<dbReference type="GO" id="GO:0005524">
    <property type="term" value="F:ATP binding"/>
    <property type="evidence" value="ECO:0007669"/>
    <property type="project" value="UniProtKB-UniRule"/>
</dbReference>
<dbReference type="GO" id="GO:0004817">
    <property type="term" value="F:cysteine-tRNA ligase activity"/>
    <property type="evidence" value="ECO:0007669"/>
    <property type="project" value="UniProtKB-UniRule"/>
</dbReference>
<dbReference type="GO" id="GO:0008270">
    <property type="term" value="F:zinc ion binding"/>
    <property type="evidence" value="ECO:0007669"/>
    <property type="project" value="UniProtKB-UniRule"/>
</dbReference>
<dbReference type="GO" id="GO:0006423">
    <property type="term" value="P:cysteinyl-tRNA aminoacylation"/>
    <property type="evidence" value="ECO:0007669"/>
    <property type="project" value="UniProtKB-UniRule"/>
</dbReference>
<dbReference type="CDD" id="cd00672">
    <property type="entry name" value="CysRS_core"/>
    <property type="match status" value="1"/>
</dbReference>
<dbReference type="FunFam" id="3.40.50.620:FF:000009">
    <property type="entry name" value="Cysteine--tRNA ligase"/>
    <property type="match status" value="1"/>
</dbReference>
<dbReference type="Gene3D" id="1.20.120.1910">
    <property type="entry name" value="Cysteine-tRNA ligase, C-terminal anti-codon recognition domain"/>
    <property type="match status" value="1"/>
</dbReference>
<dbReference type="Gene3D" id="3.40.50.620">
    <property type="entry name" value="HUPs"/>
    <property type="match status" value="1"/>
</dbReference>
<dbReference type="HAMAP" id="MF_00041">
    <property type="entry name" value="Cys_tRNA_synth"/>
    <property type="match status" value="1"/>
</dbReference>
<dbReference type="InterPro" id="IPR015803">
    <property type="entry name" value="Cys-tRNA-ligase"/>
</dbReference>
<dbReference type="InterPro" id="IPR015273">
    <property type="entry name" value="Cys-tRNA-synt_Ia_DALR"/>
</dbReference>
<dbReference type="InterPro" id="IPR024909">
    <property type="entry name" value="Cys-tRNA/MSH_ligase"/>
</dbReference>
<dbReference type="InterPro" id="IPR056411">
    <property type="entry name" value="CysS_C"/>
</dbReference>
<dbReference type="InterPro" id="IPR014729">
    <property type="entry name" value="Rossmann-like_a/b/a_fold"/>
</dbReference>
<dbReference type="InterPro" id="IPR032678">
    <property type="entry name" value="tRNA-synt_1_cat_dom"/>
</dbReference>
<dbReference type="InterPro" id="IPR009080">
    <property type="entry name" value="tRNAsynth_Ia_anticodon-bd"/>
</dbReference>
<dbReference type="NCBIfam" id="TIGR00435">
    <property type="entry name" value="cysS"/>
    <property type="match status" value="1"/>
</dbReference>
<dbReference type="PANTHER" id="PTHR10890:SF3">
    <property type="entry name" value="CYSTEINE--TRNA LIGASE, CYTOPLASMIC"/>
    <property type="match status" value="1"/>
</dbReference>
<dbReference type="PANTHER" id="PTHR10890">
    <property type="entry name" value="CYSTEINYL-TRNA SYNTHETASE"/>
    <property type="match status" value="1"/>
</dbReference>
<dbReference type="Pfam" id="PF23493">
    <property type="entry name" value="CysS_C"/>
    <property type="match status" value="1"/>
</dbReference>
<dbReference type="Pfam" id="PF09190">
    <property type="entry name" value="DALR_2"/>
    <property type="match status" value="1"/>
</dbReference>
<dbReference type="Pfam" id="PF01406">
    <property type="entry name" value="tRNA-synt_1e"/>
    <property type="match status" value="1"/>
</dbReference>
<dbReference type="PRINTS" id="PR00983">
    <property type="entry name" value="TRNASYNTHCYS"/>
</dbReference>
<dbReference type="SMART" id="SM00840">
    <property type="entry name" value="DALR_2"/>
    <property type="match status" value="1"/>
</dbReference>
<dbReference type="SUPFAM" id="SSF47323">
    <property type="entry name" value="Anticodon-binding domain of a subclass of class I aminoacyl-tRNA synthetases"/>
    <property type="match status" value="1"/>
</dbReference>
<dbReference type="SUPFAM" id="SSF52374">
    <property type="entry name" value="Nucleotidylyl transferase"/>
    <property type="match status" value="1"/>
</dbReference>
<comment type="catalytic activity">
    <reaction evidence="1">
        <text>tRNA(Cys) + L-cysteine + ATP = L-cysteinyl-tRNA(Cys) + AMP + diphosphate</text>
        <dbReference type="Rhea" id="RHEA:17773"/>
        <dbReference type="Rhea" id="RHEA-COMP:9661"/>
        <dbReference type="Rhea" id="RHEA-COMP:9679"/>
        <dbReference type="ChEBI" id="CHEBI:30616"/>
        <dbReference type="ChEBI" id="CHEBI:33019"/>
        <dbReference type="ChEBI" id="CHEBI:35235"/>
        <dbReference type="ChEBI" id="CHEBI:78442"/>
        <dbReference type="ChEBI" id="CHEBI:78517"/>
        <dbReference type="ChEBI" id="CHEBI:456215"/>
        <dbReference type="EC" id="6.1.1.16"/>
    </reaction>
</comment>
<comment type="cofactor">
    <cofactor evidence="1">
        <name>Zn(2+)</name>
        <dbReference type="ChEBI" id="CHEBI:29105"/>
    </cofactor>
    <text evidence="1">Binds 1 zinc ion per subunit.</text>
</comment>
<comment type="subunit">
    <text evidence="1">Monomer.</text>
</comment>
<comment type="subcellular location">
    <subcellularLocation>
        <location evidence="1">Cytoplasm</location>
    </subcellularLocation>
</comment>
<comment type="similarity">
    <text evidence="1">Belongs to the class-I aminoacyl-tRNA synthetase family.</text>
</comment>
<evidence type="ECO:0000255" key="1">
    <source>
        <dbReference type="HAMAP-Rule" id="MF_00041"/>
    </source>
</evidence>
<feature type="chain" id="PRO_0000240920" description="Cysteine--tRNA ligase">
    <location>
        <begin position="1"/>
        <end position="468"/>
    </location>
</feature>
<feature type="short sequence motif" description="'HIGH' region">
    <location>
        <begin position="30"/>
        <end position="40"/>
    </location>
</feature>
<feature type="short sequence motif" description="'KMSKS' region">
    <location>
        <begin position="271"/>
        <end position="275"/>
    </location>
</feature>
<feature type="binding site" evidence="1">
    <location>
        <position position="28"/>
    </location>
    <ligand>
        <name>Zn(2+)</name>
        <dbReference type="ChEBI" id="CHEBI:29105"/>
    </ligand>
</feature>
<feature type="binding site" evidence="1">
    <location>
        <position position="212"/>
    </location>
    <ligand>
        <name>Zn(2+)</name>
        <dbReference type="ChEBI" id="CHEBI:29105"/>
    </ligand>
</feature>
<feature type="binding site" evidence="1">
    <location>
        <position position="237"/>
    </location>
    <ligand>
        <name>Zn(2+)</name>
        <dbReference type="ChEBI" id="CHEBI:29105"/>
    </ligand>
</feature>
<feature type="binding site" evidence="1">
    <location>
        <position position="241"/>
    </location>
    <ligand>
        <name>Zn(2+)</name>
        <dbReference type="ChEBI" id="CHEBI:29105"/>
    </ligand>
</feature>
<feature type="binding site" evidence="1">
    <location>
        <position position="274"/>
    </location>
    <ligand>
        <name>ATP</name>
        <dbReference type="ChEBI" id="CHEBI:30616"/>
    </ligand>
</feature>
<reference key="1">
    <citation type="journal article" date="2005" name="Nat. Biotechnol.">
        <title>The complete genome sequence of the meat-borne lactic acid bacterium Lactobacillus sakei 23K.</title>
        <authorList>
            <person name="Chaillou S."/>
            <person name="Champomier-Verges M.-C."/>
            <person name="Cornet M."/>
            <person name="Crutz-Le Coq A.-M."/>
            <person name="Dudez A.-M."/>
            <person name="Martin V."/>
            <person name="Beaufils S."/>
            <person name="Darbon-Rongere E."/>
            <person name="Bossy R."/>
            <person name="Loux V."/>
            <person name="Zagorec M."/>
        </authorList>
    </citation>
    <scope>NUCLEOTIDE SEQUENCE [LARGE SCALE GENOMIC DNA]</scope>
    <source>
        <strain>23K</strain>
    </source>
</reference>
<sequence>MLTVYNTLTRQKETFKPLEEGRVKMYVCGPTVYNYIHIGNARSAIAFDTIRRYLEYRGYQVDYVSNFTDVDDKMIKAANAENITVPELADRYITAFKEDTKALNIEPATLNPRATDNIEEIVAFIQDLIAKDYAYAVDGDVYYRARKFKAYGHLAGQDLDQLEQGASEHTATEETLRKEDPIDFALWKAEKGNEIAWESPWGKGRPGWHIECSVMSTKYLGDTIDIHGGGQDLEFPHHENEIAQSEAKTGQTFVNYWLHNGFVTVGDDDQKMSKSLGNFVTVHDLIQEVNPQALRFLMSSTQYRRPIRYSQSLLAEAQTNLDRLKTTLDNLAFRQPTAEPGEDQIVMDKAAELEAAFVTAMDDDFNVQNGLTQLYELAKLSNQYLEQPTVQSDTLTSLATRLTRLLAIFGVVFKADQLLDTEVESLIEERQAARAAKDFAKSDAIRDQLKAQGIILEDTPQGMRWRRA</sequence>
<gene>
    <name evidence="1" type="primary">cysS</name>
    <name type="ordered locus">LCA_1681</name>
</gene>
<accession>Q38UZ6</accession>
<name>SYC_LATSS</name>
<proteinExistence type="inferred from homology"/>
<organism>
    <name type="scientific">Latilactobacillus sakei subsp. sakei (strain 23K)</name>
    <name type="common">Lactobacillus sakei subsp. sakei</name>
    <dbReference type="NCBI Taxonomy" id="314315"/>
    <lineage>
        <taxon>Bacteria</taxon>
        <taxon>Bacillati</taxon>
        <taxon>Bacillota</taxon>
        <taxon>Bacilli</taxon>
        <taxon>Lactobacillales</taxon>
        <taxon>Lactobacillaceae</taxon>
        <taxon>Latilactobacillus</taxon>
    </lineage>
</organism>
<keyword id="KW-0030">Aminoacyl-tRNA synthetase</keyword>
<keyword id="KW-0067">ATP-binding</keyword>
<keyword id="KW-0963">Cytoplasm</keyword>
<keyword id="KW-0436">Ligase</keyword>
<keyword id="KW-0479">Metal-binding</keyword>
<keyword id="KW-0547">Nucleotide-binding</keyword>
<keyword id="KW-0648">Protein biosynthesis</keyword>
<keyword id="KW-1185">Reference proteome</keyword>
<keyword id="KW-0862">Zinc</keyword>